<proteinExistence type="inferred from homology"/>
<evidence type="ECO:0000255" key="1">
    <source>
        <dbReference type="HAMAP-Rule" id="MF_00500"/>
    </source>
</evidence>
<evidence type="ECO:0000305" key="2"/>
<protein>
    <recommendedName>
        <fullName evidence="1">Small ribosomal subunit protein bS20</fullName>
    </recommendedName>
    <alternativeName>
        <fullName evidence="2">30S ribosomal protein S20</fullName>
    </alternativeName>
</protein>
<keyword id="KW-0687">Ribonucleoprotein</keyword>
<keyword id="KW-0689">Ribosomal protein</keyword>
<keyword id="KW-0694">RNA-binding</keyword>
<keyword id="KW-0699">rRNA-binding</keyword>
<organism>
    <name type="scientific">Streptococcus pneumoniae (strain P1031)</name>
    <dbReference type="NCBI Taxonomy" id="488223"/>
    <lineage>
        <taxon>Bacteria</taxon>
        <taxon>Bacillati</taxon>
        <taxon>Bacillota</taxon>
        <taxon>Bacilli</taxon>
        <taxon>Lactobacillales</taxon>
        <taxon>Streptococcaceae</taxon>
        <taxon>Streptococcus</taxon>
    </lineage>
</organism>
<comment type="function">
    <text evidence="1">Binds directly to 16S ribosomal RNA.</text>
</comment>
<comment type="similarity">
    <text evidence="1">Belongs to the bacterial ribosomal protein bS20 family.</text>
</comment>
<reference key="1">
    <citation type="journal article" date="2010" name="Genome Biol.">
        <title>Structure and dynamics of the pan-genome of Streptococcus pneumoniae and closely related species.</title>
        <authorList>
            <person name="Donati C."/>
            <person name="Hiller N.L."/>
            <person name="Tettelin H."/>
            <person name="Muzzi A."/>
            <person name="Croucher N.J."/>
            <person name="Angiuoli S.V."/>
            <person name="Oggioni M."/>
            <person name="Dunning Hotopp J.C."/>
            <person name="Hu F.Z."/>
            <person name="Riley D.R."/>
            <person name="Covacci A."/>
            <person name="Mitchell T.J."/>
            <person name="Bentley S.D."/>
            <person name="Kilian M."/>
            <person name="Ehrlich G.D."/>
            <person name="Rappuoli R."/>
            <person name="Moxon E.R."/>
            <person name="Masignani V."/>
        </authorList>
    </citation>
    <scope>NUCLEOTIDE SEQUENCE [LARGE SCALE GENOMIC DNA]</scope>
    <source>
        <strain>P1031</strain>
    </source>
</reference>
<dbReference type="EMBL" id="CP000920">
    <property type="protein sequence ID" value="ACO20919.1"/>
    <property type="molecule type" value="Genomic_DNA"/>
</dbReference>
<dbReference type="RefSeq" id="WP_001274000.1">
    <property type="nucleotide sequence ID" value="NC_012467.1"/>
</dbReference>
<dbReference type="SMR" id="C1CJS7"/>
<dbReference type="GeneID" id="93739844"/>
<dbReference type="KEGG" id="spp:SPP_0844"/>
<dbReference type="HOGENOM" id="CLU_160655_1_1_9"/>
<dbReference type="GO" id="GO:0005829">
    <property type="term" value="C:cytosol"/>
    <property type="evidence" value="ECO:0007669"/>
    <property type="project" value="TreeGrafter"/>
</dbReference>
<dbReference type="GO" id="GO:0015935">
    <property type="term" value="C:small ribosomal subunit"/>
    <property type="evidence" value="ECO:0007669"/>
    <property type="project" value="TreeGrafter"/>
</dbReference>
<dbReference type="GO" id="GO:0070181">
    <property type="term" value="F:small ribosomal subunit rRNA binding"/>
    <property type="evidence" value="ECO:0007669"/>
    <property type="project" value="TreeGrafter"/>
</dbReference>
<dbReference type="GO" id="GO:0003735">
    <property type="term" value="F:structural constituent of ribosome"/>
    <property type="evidence" value="ECO:0007669"/>
    <property type="project" value="InterPro"/>
</dbReference>
<dbReference type="GO" id="GO:0006412">
    <property type="term" value="P:translation"/>
    <property type="evidence" value="ECO:0007669"/>
    <property type="project" value="UniProtKB-UniRule"/>
</dbReference>
<dbReference type="FunFam" id="1.20.58.110:FF:000001">
    <property type="entry name" value="30S ribosomal protein S20"/>
    <property type="match status" value="1"/>
</dbReference>
<dbReference type="Gene3D" id="1.20.58.110">
    <property type="entry name" value="Ribosomal protein S20"/>
    <property type="match status" value="1"/>
</dbReference>
<dbReference type="HAMAP" id="MF_00500">
    <property type="entry name" value="Ribosomal_bS20"/>
    <property type="match status" value="1"/>
</dbReference>
<dbReference type="InterPro" id="IPR002583">
    <property type="entry name" value="Ribosomal_bS20"/>
</dbReference>
<dbReference type="InterPro" id="IPR036510">
    <property type="entry name" value="Ribosomal_bS20_sf"/>
</dbReference>
<dbReference type="NCBIfam" id="TIGR00029">
    <property type="entry name" value="S20"/>
    <property type="match status" value="1"/>
</dbReference>
<dbReference type="PANTHER" id="PTHR33398">
    <property type="entry name" value="30S RIBOSOMAL PROTEIN S20"/>
    <property type="match status" value="1"/>
</dbReference>
<dbReference type="PANTHER" id="PTHR33398:SF1">
    <property type="entry name" value="SMALL RIBOSOMAL SUBUNIT PROTEIN BS20C"/>
    <property type="match status" value="1"/>
</dbReference>
<dbReference type="Pfam" id="PF01649">
    <property type="entry name" value="Ribosomal_S20p"/>
    <property type="match status" value="1"/>
</dbReference>
<dbReference type="SUPFAM" id="SSF46992">
    <property type="entry name" value="Ribosomal protein S20"/>
    <property type="match status" value="1"/>
</dbReference>
<gene>
    <name evidence="1" type="primary">rpsT</name>
    <name type="ordered locus">SPP_0844</name>
</gene>
<sequence>MANIKSAIKRAELNVKQNEKNSAQKSAMRTAIKAFEANPSEELFRAASSAIDKAETKGLIHKNKASRDKARLSAKLAK</sequence>
<name>RS20_STRZP</name>
<feature type="chain" id="PRO_1000194268" description="Small ribosomal subunit protein bS20">
    <location>
        <begin position="1"/>
        <end position="78"/>
    </location>
</feature>
<accession>C1CJS7</accession>